<proteinExistence type="evidence at protein level"/>
<organism>
    <name type="scientific">Mus musculus</name>
    <name type="common">Mouse</name>
    <dbReference type="NCBI Taxonomy" id="10090"/>
    <lineage>
        <taxon>Eukaryota</taxon>
        <taxon>Metazoa</taxon>
        <taxon>Chordata</taxon>
        <taxon>Craniata</taxon>
        <taxon>Vertebrata</taxon>
        <taxon>Euteleostomi</taxon>
        <taxon>Mammalia</taxon>
        <taxon>Eutheria</taxon>
        <taxon>Euarchontoglires</taxon>
        <taxon>Glires</taxon>
        <taxon>Rodentia</taxon>
        <taxon>Myomorpha</taxon>
        <taxon>Muroidea</taxon>
        <taxon>Muridae</taxon>
        <taxon>Murinae</taxon>
        <taxon>Mus</taxon>
        <taxon>Mus</taxon>
    </lineage>
</organism>
<dbReference type="EC" id="3.6.4.-" evidence="1"/>
<dbReference type="EMBL" id="AF325920">
    <property type="protein sequence ID" value="AAK52453.1"/>
    <property type="status" value="ALT_FRAME"/>
    <property type="molecule type" value="mRNA"/>
</dbReference>
<dbReference type="EMBL" id="AK030741">
    <property type="protein sequence ID" value="BAC27109.1"/>
    <property type="molecule type" value="mRNA"/>
</dbReference>
<dbReference type="EMBL" id="AL671903">
    <property type="status" value="NOT_ANNOTATED_CDS"/>
    <property type="molecule type" value="Genomic_DNA"/>
</dbReference>
<dbReference type="EMBL" id="BC057115">
    <property type="protein sequence ID" value="AAH57115.1"/>
    <property type="molecule type" value="mRNA"/>
</dbReference>
<dbReference type="CCDS" id="CCDS30104.1">
    <molecule id="Q6PGB8-1"/>
</dbReference>
<dbReference type="CCDS" id="CCDS72374.1">
    <molecule id="Q6PGB8-2"/>
</dbReference>
<dbReference type="RefSeq" id="NP_001277637.1">
    <molecule id="Q6PGB8-2"/>
    <property type="nucleotide sequence ID" value="NM_001290708.2"/>
</dbReference>
<dbReference type="RefSeq" id="NP_001345548.1">
    <molecule id="Q6PGB8-1"/>
    <property type="nucleotide sequence ID" value="NM_001358619.1"/>
</dbReference>
<dbReference type="RefSeq" id="NP_444353.3">
    <molecule id="Q6PGB8-1"/>
    <property type="nucleotide sequence ID" value="NM_053123.4"/>
</dbReference>
<dbReference type="SMR" id="Q6PGB8"/>
<dbReference type="BioGRID" id="220299">
    <property type="interactions" value="8"/>
</dbReference>
<dbReference type="ComplexPortal" id="CPX-454">
    <property type="entry name" value="CERF chromatin remodelling complex, Smarca1 variant"/>
</dbReference>
<dbReference type="ComplexPortal" id="CPX-694">
    <property type="entry name" value="NuRF chromatin remodeling complex"/>
</dbReference>
<dbReference type="FunCoup" id="Q6PGB8">
    <property type="interactions" value="1096"/>
</dbReference>
<dbReference type="IntAct" id="Q6PGB8">
    <property type="interactions" value="1"/>
</dbReference>
<dbReference type="STRING" id="10090.ENSMUSP00000099138"/>
<dbReference type="iPTMnet" id="Q6PGB8"/>
<dbReference type="PhosphoSitePlus" id="Q6PGB8"/>
<dbReference type="jPOST" id="Q6PGB8"/>
<dbReference type="PaxDb" id="10090-ENSMUSP00000086366"/>
<dbReference type="ProteomicsDB" id="261430">
    <molecule id="Q6PGB8-1"/>
</dbReference>
<dbReference type="ProteomicsDB" id="261431">
    <molecule id="Q6PGB8-2"/>
</dbReference>
<dbReference type="Pumba" id="Q6PGB8"/>
<dbReference type="Antibodypedia" id="518">
    <property type="antibodies" value="200 antibodies from 28 providers"/>
</dbReference>
<dbReference type="DNASU" id="93761"/>
<dbReference type="Ensembl" id="ENSMUST00000077569.11">
    <molecule id="Q6PGB8-1"/>
    <property type="protein sequence ID" value="ENSMUSP00000076769.5"/>
    <property type="gene ID" value="ENSMUSG00000031099.17"/>
</dbReference>
<dbReference type="Ensembl" id="ENSMUST00000088973.11">
    <molecule id="Q6PGB8-1"/>
    <property type="protein sequence ID" value="ENSMUSP00000086366.5"/>
    <property type="gene ID" value="ENSMUSG00000031099.17"/>
</dbReference>
<dbReference type="Ensembl" id="ENSMUST00000101616.9">
    <molecule id="Q6PGB8-2"/>
    <property type="protein sequence ID" value="ENSMUSP00000099138.3"/>
    <property type="gene ID" value="ENSMUSG00000031099.17"/>
</dbReference>
<dbReference type="GeneID" id="93761"/>
<dbReference type="KEGG" id="mmu:93761"/>
<dbReference type="UCSC" id="uc009tbl.2">
    <molecule id="Q6PGB8-1"/>
    <property type="organism name" value="mouse"/>
</dbReference>
<dbReference type="UCSC" id="uc009tbm.2">
    <molecule id="Q6PGB8-2"/>
    <property type="organism name" value="mouse"/>
</dbReference>
<dbReference type="AGR" id="MGI:1935127"/>
<dbReference type="CTD" id="6594"/>
<dbReference type="MGI" id="MGI:1935127">
    <property type="gene designation" value="Smarca1"/>
</dbReference>
<dbReference type="VEuPathDB" id="HostDB:ENSMUSG00000031099"/>
<dbReference type="eggNOG" id="KOG0385">
    <property type="taxonomic scope" value="Eukaryota"/>
</dbReference>
<dbReference type="GeneTree" id="ENSGT00940000157297"/>
<dbReference type="InParanoid" id="Q6PGB8"/>
<dbReference type="OMA" id="VHDYQFF"/>
<dbReference type="OrthoDB" id="44867at9989"/>
<dbReference type="PhylomeDB" id="Q6PGB8"/>
<dbReference type="TreeFam" id="TF300674"/>
<dbReference type="BRENDA" id="2.7.11.17">
    <property type="organism ID" value="3474"/>
</dbReference>
<dbReference type="BioGRID-ORCS" id="93761">
    <property type="hits" value="2 hits in 83 CRISPR screens"/>
</dbReference>
<dbReference type="ChiTaRS" id="Smarca1">
    <property type="organism name" value="mouse"/>
</dbReference>
<dbReference type="PRO" id="PR:Q6PGB8"/>
<dbReference type="Proteomes" id="UP000000589">
    <property type="component" value="Chromosome X"/>
</dbReference>
<dbReference type="RNAct" id="Q6PGB8">
    <property type="molecule type" value="protein"/>
</dbReference>
<dbReference type="Bgee" id="ENSMUSG00000031099">
    <property type="expression patterns" value="Expressed in gonadal ridge and 229 other cell types or tissues"/>
</dbReference>
<dbReference type="ExpressionAtlas" id="Q6PGB8">
    <property type="expression patterns" value="baseline and differential"/>
</dbReference>
<dbReference type="GO" id="GO:1904949">
    <property type="term" value="C:ATPase complex"/>
    <property type="evidence" value="ECO:0000266"/>
    <property type="project" value="ComplexPortal"/>
</dbReference>
<dbReference type="GO" id="GO:0090537">
    <property type="term" value="C:CERF complex"/>
    <property type="evidence" value="ECO:0000314"/>
    <property type="project" value="UniProtKB"/>
</dbReference>
<dbReference type="GO" id="GO:0000785">
    <property type="term" value="C:chromatin"/>
    <property type="evidence" value="ECO:0000314"/>
    <property type="project" value="MGI"/>
</dbReference>
<dbReference type="GO" id="GO:0005654">
    <property type="term" value="C:nucleoplasm"/>
    <property type="evidence" value="ECO:0007669"/>
    <property type="project" value="Ensembl"/>
</dbReference>
<dbReference type="GO" id="GO:0005634">
    <property type="term" value="C:nucleus"/>
    <property type="evidence" value="ECO:0000314"/>
    <property type="project" value="MGI"/>
</dbReference>
<dbReference type="GO" id="GO:0016589">
    <property type="term" value="C:NURF complex"/>
    <property type="evidence" value="ECO:0000266"/>
    <property type="project" value="ComplexPortal"/>
</dbReference>
<dbReference type="GO" id="GO:0005524">
    <property type="term" value="F:ATP binding"/>
    <property type="evidence" value="ECO:0007669"/>
    <property type="project" value="UniProtKB-KW"/>
</dbReference>
<dbReference type="GO" id="GO:0140658">
    <property type="term" value="F:ATP-dependent chromatin remodeler activity"/>
    <property type="evidence" value="ECO:0000266"/>
    <property type="project" value="MGI"/>
</dbReference>
<dbReference type="GO" id="GO:0036310">
    <property type="term" value="F:ATP-dependent DNA/DNA annealing activity"/>
    <property type="evidence" value="ECO:0000250"/>
    <property type="project" value="UniProtKB"/>
</dbReference>
<dbReference type="GO" id="GO:0003682">
    <property type="term" value="F:chromatin binding"/>
    <property type="evidence" value="ECO:0000314"/>
    <property type="project" value="MGI"/>
</dbReference>
<dbReference type="GO" id="GO:0004386">
    <property type="term" value="F:helicase activity"/>
    <property type="evidence" value="ECO:0007669"/>
    <property type="project" value="UniProtKB-KW"/>
</dbReference>
<dbReference type="GO" id="GO:0016787">
    <property type="term" value="F:hydrolase activity"/>
    <property type="evidence" value="ECO:0007669"/>
    <property type="project" value="UniProtKB-KW"/>
</dbReference>
<dbReference type="GO" id="GO:0031491">
    <property type="term" value="F:nucleosome binding"/>
    <property type="evidence" value="ECO:0007669"/>
    <property type="project" value="InterPro"/>
</dbReference>
<dbReference type="GO" id="GO:0007420">
    <property type="term" value="P:brain development"/>
    <property type="evidence" value="ECO:0000315"/>
    <property type="project" value="MGI"/>
</dbReference>
<dbReference type="GO" id="GO:0006338">
    <property type="term" value="P:chromatin remodeling"/>
    <property type="evidence" value="ECO:0000250"/>
    <property type="project" value="HGNC"/>
</dbReference>
<dbReference type="GO" id="GO:0001843">
    <property type="term" value="P:neural tube closure"/>
    <property type="evidence" value="ECO:0000303"/>
    <property type="project" value="ComplexPortal"/>
</dbReference>
<dbReference type="GO" id="GO:0030182">
    <property type="term" value="P:neuron differentiation"/>
    <property type="evidence" value="ECO:0000315"/>
    <property type="project" value="UniProtKB"/>
</dbReference>
<dbReference type="GO" id="GO:0045893">
    <property type="term" value="P:positive regulation of DNA-templated transcription"/>
    <property type="evidence" value="ECO:0000250"/>
    <property type="project" value="HGNC"/>
</dbReference>
<dbReference type="GO" id="GO:0045944">
    <property type="term" value="P:positive regulation of transcription by RNA polymerase II"/>
    <property type="evidence" value="ECO:0000250"/>
    <property type="project" value="HGNC"/>
</dbReference>
<dbReference type="GO" id="GO:0006355">
    <property type="term" value="P:regulation of DNA-templated transcription"/>
    <property type="evidence" value="ECO:0000266"/>
    <property type="project" value="ComplexPortal"/>
</dbReference>
<dbReference type="GO" id="GO:2000177">
    <property type="term" value="P:regulation of neural precursor cell proliferation"/>
    <property type="evidence" value="ECO:0000315"/>
    <property type="project" value="MGI"/>
</dbReference>
<dbReference type="CDD" id="cd18065">
    <property type="entry name" value="DEXHc_SMARCA1"/>
    <property type="match status" value="1"/>
</dbReference>
<dbReference type="CDD" id="cd00167">
    <property type="entry name" value="SANT"/>
    <property type="match status" value="1"/>
</dbReference>
<dbReference type="CDD" id="cd18793">
    <property type="entry name" value="SF2_C_SNF"/>
    <property type="match status" value="1"/>
</dbReference>
<dbReference type="FunFam" id="3.40.50.300:FF:000082">
    <property type="entry name" value="ISWI chromatin remodeling complex ATPase ISW1"/>
    <property type="match status" value="1"/>
</dbReference>
<dbReference type="FunFam" id="1.10.10.60:FF:000022">
    <property type="entry name" value="ISWI chromatin-remodeling complex ATPase CHR11 isoform A"/>
    <property type="match status" value="1"/>
</dbReference>
<dbReference type="FunFam" id="1.10.10.60:FF:000049">
    <property type="entry name" value="SWI/SNF-related matrix-associated actin-dependent regulator of chromatin subfamily A member"/>
    <property type="match status" value="1"/>
</dbReference>
<dbReference type="FunFam" id="1.10.1040.30:FF:000001">
    <property type="entry name" value="SWI/SNF-related matrix-associated actin-dependent regulator of chromatin subfamily A member"/>
    <property type="match status" value="1"/>
</dbReference>
<dbReference type="FunFam" id="1.20.5.1190:FF:000002">
    <property type="entry name" value="SWI/SNF-related matrix-associated actin-dependent regulator of chromatin subfamily A member"/>
    <property type="match status" value="1"/>
</dbReference>
<dbReference type="FunFam" id="3.40.50.10810:FF:000101">
    <property type="entry name" value="SWI/SNF-related, matrix-associated, actin-dependent regulator of"/>
    <property type="match status" value="1"/>
</dbReference>
<dbReference type="Gene3D" id="1.10.10.60">
    <property type="entry name" value="Homeodomain-like"/>
    <property type="match status" value="2"/>
</dbReference>
<dbReference type="Gene3D" id="1.20.5.1190">
    <property type="entry name" value="iswi atpase"/>
    <property type="match status" value="1"/>
</dbReference>
<dbReference type="Gene3D" id="1.10.1040.30">
    <property type="entry name" value="ISWI, HAND domain"/>
    <property type="match status" value="1"/>
</dbReference>
<dbReference type="Gene3D" id="3.40.50.300">
    <property type="entry name" value="P-loop containing nucleotide triphosphate hydrolases"/>
    <property type="match status" value="1"/>
</dbReference>
<dbReference type="Gene3D" id="3.40.50.10810">
    <property type="entry name" value="Tandem AAA-ATPase domain"/>
    <property type="match status" value="1"/>
</dbReference>
<dbReference type="InterPro" id="IPR014001">
    <property type="entry name" value="Helicase_ATP-bd"/>
</dbReference>
<dbReference type="InterPro" id="IPR001650">
    <property type="entry name" value="Helicase_C-like"/>
</dbReference>
<dbReference type="InterPro" id="IPR009057">
    <property type="entry name" value="Homeodomain-like_sf"/>
</dbReference>
<dbReference type="InterPro" id="IPR015194">
    <property type="entry name" value="ISWI_HAND-dom"/>
</dbReference>
<dbReference type="InterPro" id="IPR036306">
    <property type="entry name" value="ISWI_HAND-dom_sf"/>
</dbReference>
<dbReference type="InterPro" id="IPR027417">
    <property type="entry name" value="P-loop_NTPase"/>
</dbReference>
<dbReference type="InterPro" id="IPR001005">
    <property type="entry name" value="SANT/Myb"/>
</dbReference>
<dbReference type="InterPro" id="IPR017884">
    <property type="entry name" value="SANT_dom"/>
</dbReference>
<dbReference type="InterPro" id="IPR015195">
    <property type="entry name" value="SLIDE"/>
</dbReference>
<dbReference type="InterPro" id="IPR044755">
    <property type="entry name" value="SMARCA1_N"/>
</dbReference>
<dbReference type="InterPro" id="IPR038718">
    <property type="entry name" value="SNF2-like_sf"/>
</dbReference>
<dbReference type="InterPro" id="IPR049730">
    <property type="entry name" value="SNF2/RAD54-like_C"/>
</dbReference>
<dbReference type="InterPro" id="IPR000330">
    <property type="entry name" value="SNF2_N"/>
</dbReference>
<dbReference type="PANTHER" id="PTHR45623">
    <property type="entry name" value="CHROMODOMAIN-HELICASE-DNA-BINDING PROTEIN 3-RELATED-RELATED"/>
    <property type="match status" value="1"/>
</dbReference>
<dbReference type="PANTHER" id="PTHR45623:SF55">
    <property type="entry name" value="SWI_SNF RELATED, MATRIX ASSOCIATED, ACTIN DEPENDENT REGULATOR OF CHROMATIN, SUBFAMILY A, MEMBER 1"/>
    <property type="match status" value="1"/>
</dbReference>
<dbReference type="Pfam" id="PF09110">
    <property type="entry name" value="HAND"/>
    <property type="match status" value="1"/>
</dbReference>
<dbReference type="Pfam" id="PF00271">
    <property type="entry name" value="Helicase_C"/>
    <property type="match status" value="1"/>
</dbReference>
<dbReference type="Pfam" id="PF09111">
    <property type="entry name" value="SLIDE"/>
    <property type="match status" value="1"/>
</dbReference>
<dbReference type="Pfam" id="PF00176">
    <property type="entry name" value="SNF2-rel_dom"/>
    <property type="match status" value="1"/>
</dbReference>
<dbReference type="SMART" id="SM00487">
    <property type="entry name" value="DEXDc"/>
    <property type="match status" value="1"/>
</dbReference>
<dbReference type="SMART" id="SM00490">
    <property type="entry name" value="HELICc"/>
    <property type="match status" value="1"/>
</dbReference>
<dbReference type="SMART" id="SM00717">
    <property type="entry name" value="SANT"/>
    <property type="match status" value="2"/>
</dbReference>
<dbReference type="SUPFAM" id="SSF101224">
    <property type="entry name" value="HAND domain of the nucleosome remodeling ATPase ISWI"/>
    <property type="match status" value="1"/>
</dbReference>
<dbReference type="SUPFAM" id="SSF46689">
    <property type="entry name" value="Homeodomain-like"/>
    <property type="match status" value="2"/>
</dbReference>
<dbReference type="SUPFAM" id="SSF52540">
    <property type="entry name" value="P-loop containing nucleoside triphosphate hydrolases"/>
    <property type="match status" value="2"/>
</dbReference>
<dbReference type="PROSITE" id="PS51192">
    <property type="entry name" value="HELICASE_ATP_BIND_1"/>
    <property type="match status" value="1"/>
</dbReference>
<dbReference type="PROSITE" id="PS51194">
    <property type="entry name" value="HELICASE_CTER"/>
    <property type="match status" value="1"/>
</dbReference>
<dbReference type="PROSITE" id="PS51293">
    <property type="entry name" value="SANT"/>
    <property type="match status" value="1"/>
</dbReference>
<feature type="chain" id="PRO_0000249246" description="SWI/SNF-related matrix-associated actin-dependent regulator of chromatin subfamily A member 1">
    <location>
        <begin position="1"/>
        <end position="1046"/>
    </location>
</feature>
<feature type="domain" description="Helicase ATP-binding" evidence="3">
    <location>
        <begin position="199"/>
        <end position="364"/>
    </location>
</feature>
<feature type="domain" description="Helicase C-terminal" evidence="4">
    <location>
        <begin position="494"/>
        <end position="645"/>
    </location>
</feature>
<feature type="domain" description="SANT 1" evidence="5">
    <location>
        <begin position="847"/>
        <end position="899"/>
    </location>
</feature>
<feature type="domain" description="SANT 2" evidence="5">
    <location>
        <begin position="950"/>
        <end position="1014"/>
    </location>
</feature>
<feature type="region of interest" description="Disordered" evidence="6">
    <location>
        <begin position="27"/>
        <end position="61"/>
    </location>
</feature>
<feature type="region of interest" description="Disordered" evidence="6">
    <location>
        <begin position="819"/>
        <end position="840"/>
    </location>
</feature>
<feature type="region of interest" description="Disordered" evidence="6">
    <location>
        <begin position="1025"/>
        <end position="1046"/>
    </location>
</feature>
<feature type="coiled-coil region" evidence="2">
    <location>
        <begin position="1003"/>
        <end position="1037"/>
    </location>
</feature>
<feature type="short sequence motif" description="DEAH box">
    <location>
        <begin position="315"/>
        <end position="318"/>
    </location>
</feature>
<feature type="compositionally biased region" description="Low complexity" evidence="6">
    <location>
        <begin position="39"/>
        <end position="50"/>
    </location>
</feature>
<feature type="compositionally biased region" description="Basic and acidic residues" evidence="6">
    <location>
        <begin position="820"/>
        <end position="829"/>
    </location>
</feature>
<feature type="binding site" evidence="3">
    <location>
        <begin position="212"/>
        <end position="219"/>
    </location>
    <ligand>
        <name>ATP</name>
        <dbReference type="ChEBI" id="CHEBI:30616"/>
    </ligand>
</feature>
<feature type="modified residue" description="Phosphoserine" evidence="1">
    <location>
        <position position="120"/>
    </location>
</feature>
<feature type="modified residue" description="Phosphoserine" evidence="1">
    <location>
        <position position="123"/>
    </location>
</feature>
<feature type="modified residue" description="Phosphotyrosine" evidence="1">
    <location>
        <position position="946"/>
    </location>
</feature>
<feature type="cross-link" description="Glycyl lysine isopeptide (Lys-Gly) (interchain with G-Cter in SUMO2)" evidence="1">
    <location>
        <position position="654"/>
    </location>
</feature>
<feature type="cross-link" description="Glycyl lysine isopeptide (Lys-Gly) (interchain with G-Cter in SUMO2)" evidence="1">
    <location>
        <position position="720"/>
    </location>
</feature>
<feature type="cross-link" description="Glycyl lysine isopeptide (Lys-Gly) (interchain with G-Cter in SUMO2)" evidence="1">
    <location>
        <position position="742"/>
    </location>
</feature>
<feature type="splice variant" id="VSP_020378" description="In isoform 2." evidence="11">
    <original>VKFSAFS</original>
    <variation>SQKRKAESATESSGRKDVKKVKS</variation>
    <location>
        <begin position="1040"/>
        <end position="1046"/>
    </location>
</feature>
<feature type="sequence conflict" description="In Ref. 1; AAK52453 and 2; BAC27109." evidence="12" ref="1 2">
    <original>G</original>
    <variation>A</variation>
    <location>
        <position position="53"/>
    </location>
</feature>
<feature type="sequence conflict" description="In Ref. 1; AAK52453." evidence="12" ref="1">
    <original>D</original>
    <variation>A</variation>
    <location>
        <position position="94"/>
    </location>
</feature>
<feature type="sequence conflict" description="In Ref. 2; BAC27109." evidence="12" ref="2">
    <original>Q</original>
    <variation>H</variation>
    <location>
        <position position="459"/>
    </location>
</feature>
<sequence length="1046" mass="121715">MEPDTATEAATVAVSDARATVVVVEDEQPGPSTFKEEGAAAAATEGTTATEKGEKKEKITSPFQLKLAAKASKSEKEMDPEYEEKMVNMPLKADRAKRFEFLLKQTELFAHFIQPSAQKSPTSPLNMKLARPRVKKDDKQSLISVGDYRHRRTEQEEDEELLSESRKTSNVCVRFEVSPSYVKGGPLRDYQIRGLNWLISLYENGVNGILADEMGLGKTLQTIALLGYLKHYRNIPGPHMVLVPKSTLHNWMNEFKRWVPSLRVICFVGDKDVRAAFIRDEMMPGEWDVCVTSYEMVIKEKSVFKKFHWRYLVIDEAHRIKNEKSKLSEIVREFKSTNRLLLTGTPLQNNLHELWALLNFLLPDVFNSADDFDSWFDTKNCLGDQKLVERLHAVLKPFLLRRIKTDVEKSLPPKKEIKIYLGLSKMQREWYTKILMKDIDVLNSSGKMDKMRLLNILMQLRKCCNHPYLFDGAEPGPPYTTDEHIVGNSGKMVALDKLLARIKEQGSRVLIFSQMTRLLDILEDYCMWRGYEYSRLDGQTPHEEREEAIDAFNAPNSSKFIFMLSTRAGGLGINLASADVVILYDSDWNPQVDLQAMDRAHRIGQKKPVRVFRLITDNTVEERIVERAEIKLRLDSIVIQQGRLIDQQSNKLAKEEMLQMIRHGATHVFACKESELTDEDIVTILERGEKKTAEMNERMQKMGESSLRNFRMDLEQSLYKFEGEDYREKQKLGTVEWIEPPKRERKANYAVDAYFREALRVSEPKIPKAPRPPKQPNVQDFQFFPPRLFELLEKEILYYRKTIGYKVPRNPEIPNPAIAQREEQKKIDGAEPLTPQETEEKDKLLTQGFTNWTKRDFNQFIKANEKYGRDDIDNIAREVEGKSPEEVMEYSAVFWERCNELQDIEKIMAQIERGEARIQRRISIKKALDAKIARYKAPFHQLRIQYGTSKGKNYTEEEDRFLICMLHKMGFDRENVYEELRQCVRNAPQFRFDWFIKSRTAMEFQRRCNTLISLIEKENMEIEERERAEKKKRATKTPMVKFSAFS</sequence>
<accession>Q6PGB8</accession>
<accession>B1AUP6</accession>
<accession>B1AUP7</accession>
<accession>Q8BSS1</accession>
<accession>Q91Y58</accession>
<protein>
    <recommendedName>
        <fullName>SWI/SNF-related matrix-associated actin-dependent regulator of chromatin subfamily A member 1</fullName>
        <shortName>SMARCA1</shortName>
        <shortName>SWI/SNF-related matrix-associated actin-dependent regulator of chromatin A1</shortName>
        <ecNumber evidence="1">3.6.4.-</ecNumber>
    </recommendedName>
    <alternativeName>
        <fullName>DNA-dependent ATPase SNF2L</fullName>
    </alternativeName>
    <alternativeName>
        <fullName>Global transcription activator SNF2L1</fullName>
    </alternativeName>
    <alternativeName>
        <fullName>Nucleosome-remodeling factor subunit SNF2L</fullName>
    </alternativeName>
</protein>
<gene>
    <name type="primary">Smarca1</name>
    <name type="synonym">Snf2l</name>
</gene>
<keyword id="KW-0010">Activator</keyword>
<keyword id="KW-0025">Alternative splicing</keyword>
<keyword id="KW-0156">Chromatin regulator</keyword>
<keyword id="KW-0175">Coiled coil</keyword>
<keyword id="KW-0238">DNA-binding</keyword>
<keyword id="KW-0378">Hydrolase</keyword>
<keyword id="KW-1017">Isopeptide bond</keyword>
<keyword id="KW-0539">Nucleus</keyword>
<keyword id="KW-0597">Phosphoprotein</keyword>
<keyword id="KW-1185">Reference proteome</keyword>
<keyword id="KW-0677">Repeat</keyword>
<keyword id="KW-0804">Transcription</keyword>
<keyword id="KW-0805">Transcription regulation</keyword>
<keyword id="KW-0832">Ubl conjugation</keyword>
<name>SMCA1_MOUSE</name>
<comment type="function">
    <text evidence="1">ATPase that possesses intrinsic ATP-dependent chromatin-remodeling activity. ATPase activity is substrate-dependent, and is increased when nucleosomes are the substrate, but is also catalytically active when DNA alone is the substrate. Catalytic subunit of ISWI chromatin-remodeling complexes, which form ordered nucleosome arrays on chromatin and facilitate access to DNA during DNA-templated processes such as DNA replication, transcription, and repair. Within the ISWI chromatin-remodeling complexes, slides edge- and center-positioned histone octamers away from their original location on the DNA template. Catalytic activity and histone octamer sliding propensity is regulated and determined by components of the ISWI chromatin-remodeling complexes. The BAZ1A-, BAZ1B-, BAZ2A- and BAZ2B-containing ISWI chromatin-remodeling complexes regulate the spacing of nucleosomes along the chromatin and have the ability to slide mononucleosomes to the center of a DNA template. The CECR2- and RSF1-containing ISWI chromatin-remodeling complexes do not have the ability to slide mononucleosomes to the center of a DNA template. Within the NURF-1 and CERF-1 ISWI chromatin remodeling complexes, nucleosomes are the preferred substrate for its ATPase activity. Within the NURF-1 ISWI chromatin-remodeling complex, binds to the promoters of En1 and En2 to positively regulate their expression and promote brain development. May promote neurite outgrowth. May be involved in the development of luteal cells. Facilitates nucleosome assembly during DNA replication, ensuring replication fork progression and genomic stability by preventing replication stress and nascent DNA gaps.</text>
</comment>
<comment type="catalytic activity">
    <reaction evidence="1">
        <text>ATP + H2O = ADP + phosphate + H(+)</text>
        <dbReference type="Rhea" id="RHEA:13065"/>
        <dbReference type="ChEBI" id="CHEBI:15377"/>
        <dbReference type="ChEBI" id="CHEBI:15378"/>
        <dbReference type="ChEBI" id="CHEBI:30616"/>
        <dbReference type="ChEBI" id="CHEBI:43474"/>
        <dbReference type="ChEBI" id="CHEBI:456216"/>
    </reaction>
    <physiologicalReaction direction="left-to-right" evidence="1">
        <dbReference type="Rhea" id="RHEA:13066"/>
    </physiologicalReaction>
</comment>
<comment type="subunit">
    <text evidence="1 10">May form homodimers (By similarity). Component of the ACF-1 ISWI chromatin remodeling complex at least composed of SMARCA1 and BAZ1A, which regulates the spacing of histone octamers on the DNA template to facilitate access to DNA (By similarity). Within the complex interacts with BAZ1A; the interaction is direct (By similarity). Component of the WICH-1 ISWI chromatin remodeling complex at least composed of SMARCA1 and BAZ1B/WSTF (By similarity). Within the complex interacts with BAZ1B/WSTF (By similarity). Component of the NoRC-1 ISWI chromatin remodeling complex at least composed of SMARCA1 and BAZ2A/TIP5 (By similarity). Within the complex interacts with BAZ2A/TIP5 (By similarity). Component of the BRF-1 ISWI chromatin remodeling complex at least composed of SMARCA1 and BAZ2B (By similarity). Within the complex interacts with BAZ2B (By similarity). Component of the NURF-1 ISWI chromatin remodeling complex (also called the nucleosome-remodeling factor (NURF) complex) at least composed of SMARCA1, BPTF, RBBP4 and RBBP7 (By similarity). Within the complex interacts with BPTF (By similarity). Within the complex interacts with RBBP4 and RBBP7 (By similarity). Component of the CERF-1 ISWI chromatin remodeling complex (also called the CECR2-containing-remodeling factor (CERF) complex) at least composed of CECR2 and SMARCA1 (PubMed:34197713). LUZP1 is detected as part of the CERF-1 complex in embryonic stem cells where it is involved in complex stabilization but is not detected in the complex in the testis (PubMed:34197713). Component of the RSF-1 ISWI chromatin remodeling complex at least composed of SMARCA1 and RSF1 (By similarity). Within the complex interacts with RSF1 (By similarity). Interacts with PRLR (By similarity). Interacts with ERCC6 (By similarity).</text>
</comment>
<comment type="subcellular location">
    <subcellularLocation>
        <location evidence="5">Nucleus</location>
    </subcellularLocation>
</comment>
<comment type="alternative products">
    <event type="alternative splicing"/>
    <isoform>
        <id>Q6PGB8-1</id>
        <name>1</name>
        <sequence type="displayed"/>
    </isoform>
    <isoform>
        <id>Q6PGB8-2</id>
        <name>2</name>
        <sequence type="described" ref="VSP_020378"/>
    </isoform>
</comment>
<comment type="tissue specificity">
    <text evidence="7 8">Predominantly expressed in cortex, cerebellum, ovaries, testes, uterus and placenta.</text>
</comment>
<comment type="developmental stage">
    <text evidence="7">Expressed throughout the embryo at 9.5 dpc-15.5 dpc. Brain expression increases during the first two weeks of postnatal development.</text>
</comment>
<comment type="induction">
    <text evidence="9">By ovulation in ovaries (at protein level).</text>
</comment>
<comment type="similarity">
    <text evidence="12">Belongs to the SNF2/RAD54 helicase family. ISWI subfamily.</text>
</comment>
<comment type="caution">
    <text evidence="1">Like other proteins within the SNF2 family, they do not possess helicase activity but instead remodel chromatin via an ATP-dependent translocation mechanism.</text>
</comment>
<comment type="sequence caution" evidence="12">
    <conflict type="frameshift">
        <sequence resource="EMBL-CDS" id="AAK52453"/>
    </conflict>
</comment>
<evidence type="ECO:0000250" key="1">
    <source>
        <dbReference type="UniProtKB" id="P28370"/>
    </source>
</evidence>
<evidence type="ECO:0000255" key="2"/>
<evidence type="ECO:0000255" key="3">
    <source>
        <dbReference type="PROSITE-ProRule" id="PRU00541"/>
    </source>
</evidence>
<evidence type="ECO:0000255" key="4">
    <source>
        <dbReference type="PROSITE-ProRule" id="PRU00542"/>
    </source>
</evidence>
<evidence type="ECO:0000255" key="5">
    <source>
        <dbReference type="PROSITE-ProRule" id="PRU00624"/>
    </source>
</evidence>
<evidence type="ECO:0000256" key="6">
    <source>
        <dbReference type="SAM" id="MobiDB-lite"/>
    </source>
</evidence>
<evidence type="ECO:0000269" key="7">
    <source>
    </source>
</evidence>
<evidence type="ECO:0000269" key="8">
    <source>
    </source>
</evidence>
<evidence type="ECO:0000269" key="9">
    <source>
    </source>
</evidence>
<evidence type="ECO:0000269" key="10">
    <source>
    </source>
</evidence>
<evidence type="ECO:0000303" key="11">
    <source>
    </source>
</evidence>
<evidence type="ECO:0000305" key="12"/>
<reference key="1">
    <citation type="journal article" date="2001" name="J. Neurochem.">
        <title>Cloning and characterization of the murine Imitation Switch (ISWI) genes: differential expression patterns suggest distinct developmental roles for Snf2h and Snf2l.</title>
        <authorList>
            <person name="Lazzaro M.A."/>
            <person name="Picketts D.J."/>
        </authorList>
    </citation>
    <scope>NUCLEOTIDE SEQUENCE [MRNA] (ISOFORM 2)</scope>
    <scope>TISSUE SPECIFICITY</scope>
    <scope>DEVELOPMENTAL STAGE</scope>
    <source>
        <strain>BALB/cJ</strain>
        <tissue>Brain</tissue>
    </source>
</reference>
<reference key="2">
    <citation type="journal article" date="2005" name="Science">
        <title>The transcriptional landscape of the mammalian genome.</title>
        <authorList>
            <person name="Carninci P."/>
            <person name="Kasukawa T."/>
            <person name="Katayama S."/>
            <person name="Gough J."/>
            <person name="Frith M.C."/>
            <person name="Maeda N."/>
            <person name="Oyama R."/>
            <person name="Ravasi T."/>
            <person name="Lenhard B."/>
            <person name="Wells C."/>
            <person name="Kodzius R."/>
            <person name="Shimokawa K."/>
            <person name="Bajic V.B."/>
            <person name="Brenner S.E."/>
            <person name="Batalov S."/>
            <person name="Forrest A.R."/>
            <person name="Zavolan M."/>
            <person name="Davis M.J."/>
            <person name="Wilming L.G."/>
            <person name="Aidinis V."/>
            <person name="Allen J.E."/>
            <person name="Ambesi-Impiombato A."/>
            <person name="Apweiler R."/>
            <person name="Aturaliya R.N."/>
            <person name="Bailey T.L."/>
            <person name="Bansal M."/>
            <person name="Baxter L."/>
            <person name="Beisel K.W."/>
            <person name="Bersano T."/>
            <person name="Bono H."/>
            <person name="Chalk A.M."/>
            <person name="Chiu K.P."/>
            <person name="Choudhary V."/>
            <person name="Christoffels A."/>
            <person name="Clutterbuck D.R."/>
            <person name="Crowe M.L."/>
            <person name="Dalla E."/>
            <person name="Dalrymple B.P."/>
            <person name="de Bono B."/>
            <person name="Della Gatta G."/>
            <person name="di Bernardo D."/>
            <person name="Down T."/>
            <person name="Engstrom P."/>
            <person name="Fagiolini M."/>
            <person name="Faulkner G."/>
            <person name="Fletcher C.F."/>
            <person name="Fukushima T."/>
            <person name="Furuno M."/>
            <person name="Futaki S."/>
            <person name="Gariboldi M."/>
            <person name="Georgii-Hemming P."/>
            <person name="Gingeras T.R."/>
            <person name="Gojobori T."/>
            <person name="Green R.E."/>
            <person name="Gustincich S."/>
            <person name="Harbers M."/>
            <person name="Hayashi Y."/>
            <person name="Hensch T.K."/>
            <person name="Hirokawa N."/>
            <person name="Hill D."/>
            <person name="Huminiecki L."/>
            <person name="Iacono M."/>
            <person name="Ikeo K."/>
            <person name="Iwama A."/>
            <person name="Ishikawa T."/>
            <person name="Jakt M."/>
            <person name="Kanapin A."/>
            <person name="Katoh M."/>
            <person name="Kawasawa Y."/>
            <person name="Kelso J."/>
            <person name="Kitamura H."/>
            <person name="Kitano H."/>
            <person name="Kollias G."/>
            <person name="Krishnan S.P."/>
            <person name="Kruger A."/>
            <person name="Kummerfeld S.K."/>
            <person name="Kurochkin I.V."/>
            <person name="Lareau L.F."/>
            <person name="Lazarevic D."/>
            <person name="Lipovich L."/>
            <person name="Liu J."/>
            <person name="Liuni S."/>
            <person name="McWilliam S."/>
            <person name="Madan Babu M."/>
            <person name="Madera M."/>
            <person name="Marchionni L."/>
            <person name="Matsuda H."/>
            <person name="Matsuzawa S."/>
            <person name="Miki H."/>
            <person name="Mignone F."/>
            <person name="Miyake S."/>
            <person name="Morris K."/>
            <person name="Mottagui-Tabar S."/>
            <person name="Mulder N."/>
            <person name="Nakano N."/>
            <person name="Nakauchi H."/>
            <person name="Ng P."/>
            <person name="Nilsson R."/>
            <person name="Nishiguchi S."/>
            <person name="Nishikawa S."/>
            <person name="Nori F."/>
            <person name="Ohara O."/>
            <person name="Okazaki Y."/>
            <person name="Orlando V."/>
            <person name="Pang K.C."/>
            <person name="Pavan W.J."/>
            <person name="Pavesi G."/>
            <person name="Pesole G."/>
            <person name="Petrovsky N."/>
            <person name="Piazza S."/>
            <person name="Reed J."/>
            <person name="Reid J.F."/>
            <person name="Ring B.Z."/>
            <person name="Ringwald M."/>
            <person name="Rost B."/>
            <person name="Ruan Y."/>
            <person name="Salzberg S.L."/>
            <person name="Sandelin A."/>
            <person name="Schneider C."/>
            <person name="Schoenbach C."/>
            <person name="Sekiguchi K."/>
            <person name="Semple C.A."/>
            <person name="Seno S."/>
            <person name="Sessa L."/>
            <person name="Sheng Y."/>
            <person name="Shibata Y."/>
            <person name="Shimada H."/>
            <person name="Shimada K."/>
            <person name="Silva D."/>
            <person name="Sinclair B."/>
            <person name="Sperling S."/>
            <person name="Stupka E."/>
            <person name="Sugiura K."/>
            <person name="Sultana R."/>
            <person name="Takenaka Y."/>
            <person name="Taki K."/>
            <person name="Tammoja K."/>
            <person name="Tan S.L."/>
            <person name="Tang S."/>
            <person name="Taylor M.S."/>
            <person name="Tegner J."/>
            <person name="Teichmann S.A."/>
            <person name="Ueda H.R."/>
            <person name="van Nimwegen E."/>
            <person name="Verardo R."/>
            <person name="Wei C.L."/>
            <person name="Yagi K."/>
            <person name="Yamanishi H."/>
            <person name="Zabarovsky E."/>
            <person name="Zhu S."/>
            <person name="Zimmer A."/>
            <person name="Hide W."/>
            <person name="Bult C."/>
            <person name="Grimmond S.M."/>
            <person name="Teasdale R.D."/>
            <person name="Liu E.T."/>
            <person name="Brusic V."/>
            <person name="Quackenbush J."/>
            <person name="Wahlestedt C."/>
            <person name="Mattick J.S."/>
            <person name="Hume D.A."/>
            <person name="Kai C."/>
            <person name="Sasaki D."/>
            <person name="Tomaru Y."/>
            <person name="Fukuda S."/>
            <person name="Kanamori-Katayama M."/>
            <person name="Suzuki M."/>
            <person name="Aoki J."/>
            <person name="Arakawa T."/>
            <person name="Iida J."/>
            <person name="Imamura K."/>
            <person name="Itoh M."/>
            <person name="Kato T."/>
            <person name="Kawaji H."/>
            <person name="Kawagashira N."/>
            <person name="Kawashima T."/>
            <person name="Kojima M."/>
            <person name="Kondo S."/>
            <person name="Konno H."/>
            <person name="Nakano K."/>
            <person name="Ninomiya N."/>
            <person name="Nishio T."/>
            <person name="Okada M."/>
            <person name="Plessy C."/>
            <person name="Shibata K."/>
            <person name="Shiraki T."/>
            <person name="Suzuki S."/>
            <person name="Tagami M."/>
            <person name="Waki K."/>
            <person name="Watahiki A."/>
            <person name="Okamura-Oho Y."/>
            <person name="Suzuki H."/>
            <person name="Kawai J."/>
            <person name="Hayashizaki Y."/>
        </authorList>
    </citation>
    <scope>NUCLEOTIDE SEQUENCE [LARGE SCALE MRNA] (ISOFORM 1)</scope>
    <source>
        <strain>C57BL/6J</strain>
    </source>
</reference>
<reference key="3">
    <citation type="journal article" date="2009" name="PLoS Biol.">
        <title>Lineage-specific biology revealed by a finished genome assembly of the mouse.</title>
        <authorList>
            <person name="Church D.M."/>
            <person name="Goodstadt L."/>
            <person name="Hillier L.W."/>
            <person name="Zody M.C."/>
            <person name="Goldstein S."/>
            <person name="She X."/>
            <person name="Bult C.J."/>
            <person name="Agarwala R."/>
            <person name="Cherry J.L."/>
            <person name="DiCuccio M."/>
            <person name="Hlavina W."/>
            <person name="Kapustin Y."/>
            <person name="Meric P."/>
            <person name="Maglott D."/>
            <person name="Birtle Z."/>
            <person name="Marques A.C."/>
            <person name="Graves T."/>
            <person name="Zhou S."/>
            <person name="Teague B."/>
            <person name="Potamousis K."/>
            <person name="Churas C."/>
            <person name="Place M."/>
            <person name="Herschleb J."/>
            <person name="Runnheim R."/>
            <person name="Forrest D."/>
            <person name="Amos-Landgraf J."/>
            <person name="Schwartz D.C."/>
            <person name="Cheng Z."/>
            <person name="Lindblad-Toh K."/>
            <person name="Eichler E.E."/>
            <person name="Ponting C.P."/>
        </authorList>
    </citation>
    <scope>NUCLEOTIDE SEQUENCE [LARGE SCALE GENOMIC DNA]</scope>
    <source>
        <strain>C57BL/6J</strain>
    </source>
</reference>
<reference key="4">
    <citation type="journal article" date="2004" name="Genome Res.">
        <title>The status, quality, and expansion of the NIH full-length cDNA project: the Mammalian Gene Collection (MGC).</title>
        <authorList>
            <consortium name="The MGC Project Team"/>
        </authorList>
    </citation>
    <scope>NUCLEOTIDE SEQUENCE [LARGE SCALE MRNA] (ISOFORM 1)</scope>
    <source>
        <strain>C57BL/6J</strain>
        <tissue>Brain</tissue>
    </source>
</reference>
<reference key="5">
    <citation type="journal article" date="2003" name="EMBO J.">
        <title>Isolation of human NURF: a regulator of Engrailed gene expression.</title>
        <authorList>
            <person name="Barak O."/>
            <person name="Lazzaro M.A."/>
            <person name="Lane W.S."/>
            <person name="Speicher D.W."/>
            <person name="Picketts D.J."/>
            <person name="Shiekhattar R."/>
        </authorList>
    </citation>
    <scope>TISSUE SPECIFICITY</scope>
</reference>
<reference key="6">
    <citation type="journal article" date="2006" name="Mol. Endocrinol.">
        <title>The imitation switch protein SNF2L regulates steroidogenic acute regulatory protein expression during terminal differentiation of ovarian granulosa cells.</title>
        <authorList>
            <person name="Lazzaro M.A."/>
            <person name="Pepin D."/>
            <person name="Pescador N."/>
            <person name="Murphy B.D."/>
            <person name="Vanderhyden B.C."/>
            <person name="Picketts D.J."/>
        </authorList>
    </citation>
    <scope>INDUCTION</scope>
</reference>
<reference key="7">
    <citation type="journal article" date="2021" name="Biochem. Cell Biol.">
        <title>Chromatin remodeling factor CECR2 forms tissue-specific complexes with CCAR2 and LUZP1.</title>
        <authorList>
            <person name="Niri F."/>
            <person name="Terpstra A.N."/>
            <person name="Lim K.R.Q."/>
            <person name="McDermid H.E."/>
        </authorList>
    </citation>
    <scope>IDENTIFICATION IN THE CERF-1 COMPLEX</scope>
</reference>